<keyword id="KW-1032">Host cell membrane</keyword>
<keyword id="KW-1043">Host membrane</keyword>
<keyword id="KW-0472">Membrane</keyword>
<keyword id="KW-1185">Reference proteome</keyword>
<keyword id="KW-0812">Transmembrane</keyword>
<keyword id="KW-1133">Transmembrane helix</keyword>
<keyword id="KW-0813">Transport</keyword>
<keyword id="KW-0916">Viral movement protein</keyword>
<gene>
    <name type="primary">DNA-M</name>
    <name type="synonym">C8</name>
</gene>
<dbReference type="EMBL" id="AB000927">
    <property type="protein sequence ID" value="BAA33987.1"/>
    <property type="molecule type" value="Genomic_DNA"/>
</dbReference>
<dbReference type="RefSeq" id="NP_619766.1">
    <property type="nucleotide sequence ID" value="NC_003645.1"/>
</dbReference>
<dbReference type="SMR" id="Q9Z0C8"/>
<dbReference type="KEGG" id="vg:995285"/>
<dbReference type="Proteomes" id="UP001507899">
    <property type="component" value="Genome"/>
</dbReference>
<dbReference type="GO" id="GO:0020002">
    <property type="term" value="C:host cell plasma membrane"/>
    <property type="evidence" value="ECO:0007669"/>
    <property type="project" value="UniProtKB-SubCell"/>
</dbReference>
<dbReference type="GO" id="GO:0016020">
    <property type="term" value="C:membrane"/>
    <property type="evidence" value="ECO:0007669"/>
    <property type="project" value="UniProtKB-KW"/>
</dbReference>
<dbReference type="GO" id="GO:0046740">
    <property type="term" value="P:transport of virus in host, cell to cell"/>
    <property type="evidence" value="ECO:0007669"/>
    <property type="project" value="UniProtKB-KW"/>
</dbReference>
<sequence>MADPVYYQGYQDDGDIDAQKRHQALYLIGIIILIMVCIIILWVCIMLACYIPGFLKKTMEAWLSSSSMMKRRVAATITRTPFEATGPERERNWDARRQTNAASSQPSNGGVF</sequence>
<comment type="function">
    <text evidence="1">May transport viral genome to neighboring plant cells directly through plasmosdesmata, without any budding. The movement protein allows efficient cell to cell propagation, by bypassing the host cell wall barrier (By similarity).</text>
</comment>
<comment type="subcellular location">
    <subcellularLocation>
        <location evidence="4">Host cell membrane</location>
        <topology evidence="4">Single-pass membrane protein</topology>
    </subcellularLocation>
    <text evidence="1">The hydrophobic region is responsible for the localization of the protein to the cell periphery.</text>
</comment>
<comment type="similarity">
    <text evidence="4">Belongs to the nanovirus movement protein family.</text>
</comment>
<organism>
    <name type="scientific">Milk vetch dwarf virus (isolate N)</name>
    <name type="common">MDV</name>
    <dbReference type="NCBI Taxonomy" id="291605"/>
    <lineage>
        <taxon>Viruses</taxon>
        <taxon>Monodnaviria</taxon>
        <taxon>Shotokuvirae</taxon>
        <taxon>Cressdnaviricota</taxon>
        <taxon>Arfiviricetes</taxon>
        <taxon>Mulpavirales</taxon>
        <taxon>Nanoviridae</taxon>
        <taxon>Nanovirus</taxon>
        <taxon>Milk vetch dwarf virus</taxon>
    </lineage>
</organism>
<proteinExistence type="inferred from homology"/>
<evidence type="ECO:0000250" key="1"/>
<evidence type="ECO:0000255" key="2"/>
<evidence type="ECO:0000256" key="3">
    <source>
        <dbReference type="SAM" id="MobiDB-lite"/>
    </source>
</evidence>
<evidence type="ECO:0000305" key="4"/>
<reference key="1">
    <citation type="journal article" date="1998" name="J. Gen. Virol.">
        <title>Sequences of ten circular ssDNA components associated with the milk vetch dwarf virus genome.</title>
        <authorList>
            <person name="Sano Y."/>
            <person name="Wada M."/>
            <person name="Hashimoto Y."/>
            <person name="Matsumoto T."/>
            <person name="Kojima M."/>
        </authorList>
    </citation>
    <scope>NUCLEOTIDE SEQUENCE [GENOMIC DNA]</scope>
</reference>
<feature type="chain" id="PRO_0000378539" description="Putative movement protein">
    <location>
        <begin position="1"/>
        <end position="112"/>
    </location>
</feature>
<feature type="transmembrane region" description="Helical" evidence="2">
    <location>
        <begin position="27"/>
        <end position="47"/>
    </location>
</feature>
<feature type="region of interest" description="Disordered" evidence="3">
    <location>
        <begin position="80"/>
        <end position="112"/>
    </location>
</feature>
<feature type="compositionally biased region" description="Basic and acidic residues" evidence="3">
    <location>
        <begin position="86"/>
        <end position="97"/>
    </location>
</feature>
<feature type="compositionally biased region" description="Polar residues" evidence="3">
    <location>
        <begin position="98"/>
        <end position="112"/>
    </location>
</feature>
<organismHost>
    <name type="scientific">Astragalus sinicus</name>
    <name type="common">Chinese milk vetch</name>
    <dbReference type="NCBI Taxonomy" id="47065"/>
</organismHost>
<organismHost>
    <name type="scientific">Glycine max</name>
    <name type="common">Soybean</name>
    <name type="synonym">Glycine hispida</name>
    <dbReference type="NCBI Taxonomy" id="3847"/>
</organismHost>
<organismHost>
    <name type="scientific">Phaseolus vulgaris</name>
    <name type="common">Kidney bean</name>
    <name type="synonym">French bean</name>
    <dbReference type="NCBI Taxonomy" id="3885"/>
</organismHost>
<organismHost>
    <name type="scientific">Pisum sativum</name>
    <name type="common">Garden pea</name>
    <name type="synonym">Lathyrus oleraceus</name>
    <dbReference type="NCBI Taxonomy" id="3888"/>
</organismHost>
<organismHost>
    <name type="scientific">Vicia faba</name>
    <name type="common">Broad bean</name>
    <name type="synonym">Faba vulgaris</name>
    <dbReference type="NCBI Taxonomy" id="3906"/>
</organismHost>
<protein>
    <recommendedName>
        <fullName>Putative movement protein</fullName>
        <shortName>MP</shortName>
    </recommendedName>
</protein>
<name>MVP_MDV1</name>
<accession>Q9Z0C8</accession>